<gene>
    <name evidence="1" type="primary">gatC</name>
    <name type="ordered locus">A1I_01640</name>
</gene>
<name>GATC_RICB8</name>
<evidence type="ECO:0000255" key="1">
    <source>
        <dbReference type="HAMAP-Rule" id="MF_00122"/>
    </source>
</evidence>
<organism>
    <name type="scientific">Rickettsia bellii (strain OSU 85-389)</name>
    <dbReference type="NCBI Taxonomy" id="391896"/>
    <lineage>
        <taxon>Bacteria</taxon>
        <taxon>Pseudomonadati</taxon>
        <taxon>Pseudomonadota</taxon>
        <taxon>Alphaproteobacteria</taxon>
        <taxon>Rickettsiales</taxon>
        <taxon>Rickettsiaceae</taxon>
        <taxon>Rickettsieae</taxon>
        <taxon>Rickettsia</taxon>
        <taxon>belli group</taxon>
    </lineage>
</organism>
<comment type="function">
    <text evidence="1">Allows the formation of correctly charged Asn-tRNA(Asn) or Gln-tRNA(Gln) through the transamidation of misacylated Asp-tRNA(Asn) or Glu-tRNA(Gln) in organisms which lack either or both of asparaginyl-tRNA or glutaminyl-tRNA synthetases. The reaction takes place in the presence of glutamine and ATP through an activated phospho-Asp-tRNA(Asn) or phospho-Glu-tRNA(Gln).</text>
</comment>
<comment type="catalytic activity">
    <reaction evidence="1">
        <text>L-glutamyl-tRNA(Gln) + L-glutamine + ATP + H2O = L-glutaminyl-tRNA(Gln) + L-glutamate + ADP + phosphate + H(+)</text>
        <dbReference type="Rhea" id="RHEA:17521"/>
        <dbReference type="Rhea" id="RHEA-COMP:9681"/>
        <dbReference type="Rhea" id="RHEA-COMP:9684"/>
        <dbReference type="ChEBI" id="CHEBI:15377"/>
        <dbReference type="ChEBI" id="CHEBI:15378"/>
        <dbReference type="ChEBI" id="CHEBI:29985"/>
        <dbReference type="ChEBI" id="CHEBI:30616"/>
        <dbReference type="ChEBI" id="CHEBI:43474"/>
        <dbReference type="ChEBI" id="CHEBI:58359"/>
        <dbReference type="ChEBI" id="CHEBI:78520"/>
        <dbReference type="ChEBI" id="CHEBI:78521"/>
        <dbReference type="ChEBI" id="CHEBI:456216"/>
    </reaction>
</comment>
<comment type="catalytic activity">
    <reaction evidence="1">
        <text>L-aspartyl-tRNA(Asn) + L-glutamine + ATP + H2O = L-asparaginyl-tRNA(Asn) + L-glutamate + ADP + phosphate + 2 H(+)</text>
        <dbReference type="Rhea" id="RHEA:14513"/>
        <dbReference type="Rhea" id="RHEA-COMP:9674"/>
        <dbReference type="Rhea" id="RHEA-COMP:9677"/>
        <dbReference type="ChEBI" id="CHEBI:15377"/>
        <dbReference type="ChEBI" id="CHEBI:15378"/>
        <dbReference type="ChEBI" id="CHEBI:29985"/>
        <dbReference type="ChEBI" id="CHEBI:30616"/>
        <dbReference type="ChEBI" id="CHEBI:43474"/>
        <dbReference type="ChEBI" id="CHEBI:58359"/>
        <dbReference type="ChEBI" id="CHEBI:78515"/>
        <dbReference type="ChEBI" id="CHEBI:78516"/>
        <dbReference type="ChEBI" id="CHEBI:456216"/>
    </reaction>
</comment>
<comment type="subunit">
    <text evidence="1">Heterotrimer of A, B and C subunits.</text>
</comment>
<comment type="similarity">
    <text evidence="1">Belongs to the GatC family.</text>
</comment>
<proteinExistence type="inferred from homology"/>
<accession>A8GV47</accession>
<dbReference type="EC" id="6.3.5.-" evidence="1"/>
<dbReference type="EMBL" id="CP000849">
    <property type="protein sequence ID" value="ABV78718.1"/>
    <property type="molecule type" value="Genomic_DNA"/>
</dbReference>
<dbReference type="RefSeq" id="WP_012151636.1">
    <property type="nucleotide sequence ID" value="NC_009883.1"/>
</dbReference>
<dbReference type="SMR" id="A8GV47"/>
<dbReference type="KEGG" id="rbo:A1I_01640"/>
<dbReference type="HOGENOM" id="CLU_105899_2_0_5"/>
<dbReference type="GO" id="GO:0050566">
    <property type="term" value="F:asparaginyl-tRNA synthase (glutamine-hydrolyzing) activity"/>
    <property type="evidence" value="ECO:0007669"/>
    <property type="project" value="RHEA"/>
</dbReference>
<dbReference type="GO" id="GO:0005524">
    <property type="term" value="F:ATP binding"/>
    <property type="evidence" value="ECO:0007669"/>
    <property type="project" value="UniProtKB-KW"/>
</dbReference>
<dbReference type="GO" id="GO:0050567">
    <property type="term" value="F:glutaminyl-tRNA synthase (glutamine-hydrolyzing) activity"/>
    <property type="evidence" value="ECO:0007669"/>
    <property type="project" value="UniProtKB-UniRule"/>
</dbReference>
<dbReference type="GO" id="GO:0070681">
    <property type="term" value="P:glutaminyl-tRNAGln biosynthesis via transamidation"/>
    <property type="evidence" value="ECO:0007669"/>
    <property type="project" value="TreeGrafter"/>
</dbReference>
<dbReference type="GO" id="GO:0006450">
    <property type="term" value="P:regulation of translational fidelity"/>
    <property type="evidence" value="ECO:0007669"/>
    <property type="project" value="InterPro"/>
</dbReference>
<dbReference type="GO" id="GO:0006412">
    <property type="term" value="P:translation"/>
    <property type="evidence" value="ECO:0007669"/>
    <property type="project" value="UniProtKB-UniRule"/>
</dbReference>
<dbReference type="Gene3D" id="1.10.20.60">
    <property type="entry name" value="Glu-tRNAGln amidotransferase C subunit, N-terminal domain"/>
    <property type="match status" value="1"/>
</dbReference>
<dbReference type="HAMAP" id="MF_00122">
    <property type="entry name" value="GatC"/>
    <property type="match status" value="1"/>
</dbReference>
<dbReference type="InterPro" id="IPR036113">
    <property type="entry name" value="Asp/Glu-ADT_sf_sub_c"/>
</dbReference>
<dbReference type="InterPro" id="IPR003837">
    <property type="entry name" value="GatC"/>
</dbReference>
<dbReference type="NCBIfam" id="TIGR00135">
    <property type="entry name" value="gatC"/>
    <property type="match status" value="1"/>
</dbReference>
<dbReference type="PANTHER" id="PTHR15004">
    <property type="entry name" value="GLUTAMYL-TRNA(GLN) AMIDOTRANSFERASE SUBUNIT C, MITOCHONDRIAL"/>
    <property type="match status" value="1"/>
</dbReference>
<dbReference type="PANTHER" id="PTHR15004:SF0">
    <property type="entry name" value="GLUTAMYL-TRNA(GLN) AMIDOTRANSFERASE SUBUNIT C, MITOCHONDRIAL"/>
    <property type="match status" value="1"/>
</dbReference>
<dbReference type="Pfam" id="PF02686">
    <property type="entry name" value="GatC"/>
    <property type="match status" value="1"/>
</dbReference>
<dbReference type="SUPFAM" id="SSF141000">
    <property type="entry name" value="Glu-tRNAGln amidotransferase C subunit"/>
    <property type="match status" value="1"/>
</dbReference>
<feature type="chain" id="PRO_1000016202" description="Aspartyl/glutamyl-tRNA(Asn/Gln) amidotransferase subunit C">
    <location>
        <begin position="1"/>
        <end position="100"/>
    </location>
</feature>
<keyword id="KW-0067">ATP-binding</keyword>
<keyword id="KW-0436">Ligase</keyword>
<keyword id="KW-0547">Nucleotide-binding</keyword>
<keyword id="KW-0648">Protein biosynthesis</keyword>
<sequence>MITKEEVKKITKLARLKFEEDKVEEFSSRLSSIMDMINILNEIDCTDVKPLTSVCDMQARMRPDEVTSKDHSNELFDNVQGASQQLAKEVKYFITPKVVE</sequence>
<reference key="1">
    <citation type="submission" date="2007-09" db="EMBL/GenBank/DDBJ databases">
        <title>Complete genome sequencing of Rickettsia bellii.</title>
        <authorList>
            <person name="Madan A."/>
            <person name="Lee H."/>
            <person name="Madan A."/>
            <person name="Yoon J.-G."/>
            <person name="Ryu G.-Y."/>
            <person name="Dasch G."/>
            <person name="Ereemeva M."/>
        </authorList>
    </citation>
    <scope>NUCLEOTIDE SEQUENCE [LARGE SCALE GENOMIC DNA]</scope>
    <source>
        <strain>OSU 85-389</strain>
    </source>
</reference>
<protein>
    <recommendedName>
        <fullName evidence="1">Aspartyl/glutamyl-tRNA(Asn/Gln) amidotransferase subunit C</fullName>
        <shortName evidence="1">Asp/Glu-ADT subunit C</shortName>
        <ecNumber evidence="1">6.3.5.-</ecNumber>
    </recommendedName>
</protein>